<reference key="1">
    <citation type="journal article" date="2008" name="PLoS ONE">
        <title>Genome biology of Actinobacillus pleuropneumoniae JL03, an isolate of serotype 3 prevalent in China.</title>
        <authorList>
            <person name="Xu Z."/>
            <person name="Zhou Y."/>
            <person name="Li L."/>
            <person name="Zhou R."/>
            <person name="Xiao S."/>
            <person name="Wan Y."/>
            <person name="Zhang S."/>
            <person name="Wang K."/>
            <person name="Li W."/>
            <person name="Li L."/>
            <person name="Jin H."/>
            <person name="Kang M."/>
            <person name="Dalai B."/>
            <person name="Li T."/>
            <person name="Liu L."/>
            <person name="Cheng Y."/>
            <person name="Zhang L."/>
            <person name="Xu T."/>
            <person name="Zheng H."/>
            <person name="Pu S."/>
            <person name="Wang B."/>
            <person name="Gu W."/>
            <person name="Zhang X.L."/>
            <person name="Zhu G.-F."/>
            <person name="Wang S."/>
            <person name="Zhao G.-P."/>
            <person name="Chen H."/>
        </authorList>
    </citation>
    <scope>NUCLEOTIDE SEQUENCE [LARGE SCALE GENOMIC DNA]</scope>
    <source>
        <strain>JL03</strain>
    </source>
</reference>
<gene>
    <name evidence="1" type="primary">gloB</name>
    <name type="ordered locus">APJL_0439</name>
</gene>
<dbReference type="EC" id="3.1.2.6" evidence="1"/>
<dbReference type="EMBL" id="CP000687">
    <property type="protein sequence ID" value="ABY69024.1"/>
    <property type="molecule type" value="Genomic_DNA"/>
</dbReference>
<dbReference type="RefSeq" id="WP_005607164.1">
    <property type="nucleotide sequence ID" value="NC_010278.1"/>
</dbReference>
<dbReference type="SMR" id="B0BTR9"/>
<dbReference type="KEGG" id="apj:APJL_0439"/>
<dbReference type="HOGENOM" id="CLU_030571_4_1_6"/>
<dbReference type="UniPathway" id="UPA00619">
    <property type="reaction ID" value="UER00676"/>
</dbReference>
<dbReference type="Proteomes" id="UP000008547">
    <property type="component" value="Chromosome"/>
</dbReference>
<dbReference type="GO" id="GO:0004416">
    <property type="term" value="F:hydroxyacylglutathione hydrolase activity"/>
    <property type="evidence" value="ECO:0007669"/>
    <property type="project" value="UniProtKB-UniRule"/>
</dbReference>
<dbReference type="GO" id="GO:0046872">
    <property type="term" value="F:metal ion binding"/>
    <property type="evidence" value="ECO:0007669"/>
    <property type="project" value="UniProtKB-KW"/>
</dbReference>
<dbReference type="GO" id="GO:0019243">
    <property type="term" value="P:methylglyoxal catabolic process to D-lactate via S-lactoyl-glutathione"/>
    <property type="evidence" value="ECO:0007669"/>
    <property type="project" value="InterPro"/>
</dbReference>
<dbReference type="CDD" id="cd07723">
    <property type="entry name" value="hydroxyacylglutathione_hydrolase_MBL-fold"/>
    <property type="match status" value="1"/>
</dbReference>
<dbReference type="Gene3D" id="3.60.15.10">
    <property type="entry name" value="Ribonuclease Z/Hydroxyacylglutathione hydrolase-like"/>
    <property type="match status" value="1"/>
</dbReference>
<dbReference type="HAMAP" id="MF_01374">
    <property type="entry name" value="Glyoxalase_2"/>
    <property type="match status" value="1"/>
</dbReference>
<dbReference type="InterPro" id="IPR035680">
    <property type="entry name" value="Clx_II_MBL"/>
</dbReference>
<dbReference type="InterPro" id="IPR050110">
    <property type="entry name" value="Glyoxalase_II_hydrolase"/>
</dbReference>
<dbReference type="InterPro" id="IPR032282">
    <property type="entry name" value="HAGH_C"/>
</dbReference>
<dbReference type="InterPro" id="IPR017782">
    <property type="entry name" value="Hydroxyacylglutathione_Hdrlase"/>
</dbReference>
<dbReference type="InterPro" id="IPR001279">
    <property type="entry name" value="Metallo-B-lactamas"/>
</dbReference>
<dbReference type="InterPro" id="IPR036866">
    <property type="entry name" value="RibonucZ/Hydroxyglut_hydro"/>
</dbReference>
<dbReference type="NCBIfam" id="TIGR03413">
    <property type="entry name" value="GSH_gloB"/>
    <property type="match status" value="1"/>
</dbReference>
<dbReference type="PANTHER" id="PTHR43705">
    <property type="entry name" value="HYDROXYACYLGLUTATHIONE HYDROLASE"/>
    <property type="match status" value="1"/>
</dbReference>
<dbReference type="PANTHER" id="PTHR43705:SF1">
    <property type="entry name" value="HYDROXYACYLGLUTATHIONE HYDROLASE GLOB"/>
    <property type="match status" value="1"/>
</dbReference>
<dbReference type="Pfam" id="PF16123">
    <property type="entry name" value="HAGH_C"/>
    <property type="match status" value="1"/>
</dbReference>
<dbReference type="Pfam" id="PF00753">
    <property type="entry name" value="Lactamase_B"/>
    <property type="match status" value="1"/>
</dbReference>
<dbReference type="SMART" id="SM00849">
    <property type="entry name" value="Lactamase_B"/>
    <property type="match status" value="1"/>
</dbReference>
<dbReference type="SUPFAM" id="SSF56281">
    <property type="entry name" value="Metallo-hydrolase/oxidoreductase"/>
    <property type="match status" value="1"/>
</dbReference>
<name>GLO2_ACTPJ</name>
<evidence type="ECO:0000255" key="1">
    <source>
        <dbReference type="HAMAP-Rule" id="MF_01374"/>
    </source>
</evidence>
<accession>B0BTR9</accession>
<proteinExistence type="inferred from homology"/>
<comment type="function">
    <text evidence="1">Thiolesterase that catalyzes the hydrolysis of S-D-lactoyl-glutathione to form glutathione and D-lactic acid.</text>
</comment>
<comment type="catalytic activity">
    <reaction evidence="1">
        <text>an S-(2-hydroxyacyl)glutathione + H2O = a 2-hydroxy carboxylate + glutathione + H(+)</text>
        <dbReference type="Rhea" id="RHEA:21864"/>
        <dbReference type="ChEBI" id="CHEBI:15377"/>
        <dbReference type="ChEBI" id="CHEBI:15378"/>
        <dbReference type="ChEBI" id="CHEBI:57925"/>
        <dbReference type="ChEBI" id="CHEBI:58896"/>
        <dbReference type="ChEBI" id="CHEBI:71261"/>
        <dbReference type="EC" id="3.1.2.6"/>
    </reaction>
</comment>
<comment type="cofactor">
    <cofactor evidence="1">
        <name>Zn(2+)</name>
        <dbReference type="ChEBI" id="CHEBI:29105"/>
    </cofactor>
    <text evidence="1">Binds 2 Zn(2+) ions per subunit.</text>
</comment>
<comment type="pathway">
    <text evidence="1">Secondary metabolite metabolism; methylglyoxal degradation; (R)-lactate from methylglyoxal: step 2/2.</text>
</comment>
<comment type="subunit">
    <text evidence="1">Monomer.</text>
</comment>
<comment type="similarity">
    <text evidence="1">Belongs to the metallo-beta-lactamase superfamily. Glyoxalase II family.</text>
</comment>
<organism>
    <name type="scientific">Actinobacillus pleuropneumoniae serotype 3 (strain JL03)</name>
    <dbReference type="NCBI Taxonomy" id="434271"/>
    <lineage>
        <taxon>Bacteria</taxon>
        <taxon>Pseudomonadati</taxon>
        <taxon>Pseudomonadota</taxon>
        <taxon>Gammaproteobacteria</taxon>
        <taxon>Pasteurellales</taxon>
        <taxon>Pasteurellaceae</taxon>
        <taxon>Actinobacillus</taxon>
    </lineage>
</organism>
<sequence length="235" mass="26642">MLNITPIPALSDNYIWAIQKDNDVIIVDPSDAVPVLAFIAKNQLNLTAILLTHNHHDHTDGMPELLSRYPQLSVYGPQEVAQFANRIVQPEDHLTLFDYDVRVIESAGHTAQHVSYLFGNEYLFCGDVLFSGGCGRVFTGNYQAQFDALQRFKALPEFVEIFPAHEYTLSNLKFAEAVLAPSCALFEIQERAEILRSRNQPTLPTTLERELQINPFLQAVDLDQFIALRHQKDNF</sequence>
<protein>
    <recommendedName>
        <fullName evidence="1">Hydroxyacylglutathione hydrolase</fullName>
        <ecNumber evidence="1">3.1.2.6</ecNumber>
    </recommendedName>
    <alternativeName>
        <fullName evidence="1">Glyoxalase II</fullName>
        <shortName evidence="1">Glx II</shortName>
    </alternativeName>
</protein>
<keyword id="KW-0378">Hydrolase</keyword>
<keyword id="KW-0479">Metal-binding</keyword>
<keyword id="KW-0862">Zinc</keyword>
<feature type="chain" id="PRO_1000144749" description="Hydroxyacylglutathione hydrolase">
    <location>
        <begin position="1"/>
        <end position="235"/>
    </location>
</feature>
<feature type="binding site" evidence="1">
    <location>
        <position position="53"/>
    </location>
    <ligand>
        <name>Zn(2+)</name>
        <dbReference type="ChEBI" id="CHEBI:29105"/>
        <label>1</label>
    </ligand>
</feature>
<feature type="binding site" evidence="1">
    <location>
        <position position="55"/>
    </location>
    <ligand>
        <name>Zn(2+)</name>
        <dbReference type="ChEBI" id="CHEBI:29105"/>
        <label>1</label>
    </ligand>
</feature>
<feature type="binding site" evidence="1">
    <location>
        <position position="57"/>
    </location>
    <ligand>
        <name>Zn(2+)</name>
        <dbReference type="ChEBI" id="CHEBI:29105"/>
        <label>2</label>
    </ligand>
</feature>
<feature type="binding site" evidence="1">
    <location>
        <position position="58"/>
    </location>
    <ligand>
        <name>Zn(2+)</name>
        <dbReference type="ChEBI" id="CHEBI:29105"/>
        <label>2</label>
    </ligand>
</feature>
<feature type="binding site" evidence="1">
    <location>
        <position position="109"/>
    </location>
    <ligand>
        <name>Zn(2+)</name>
        <dbReference type="ChEBI" id="CHEBI:29105"/>
        <label>1</label>
    </ligand>
</feature>
<feature type="binding site" evidence="1">
    <location>
        <position position="127"/>
    </location>
    <ligand>
        <name>Zn(2+)</name>
        <dbReference type="ChEBI" id="CHEBI:29105"/>
        <label>1</label>
    </ligand>
</feature>
<feature type="binding site" evidence="1">
    <location>
        <position position="127"/>
    </location>
    <ligand>
        <name>Zn(2+)</name>
        <dbReference type="ChEBI" id="CHEBI:29105"/>
        <label>2</label>
    </ligand>
</feature>
<feature type="binding site" evidence="1">
    <location>
        <position position="165"/>
    </location>
    <ligand>
        <name>Zn(2+)</name>
        <dbReference type="ChEBI" id="CHEBI:29105"/>
        <label>2</label>
    </ligand>
</feature>